<gene>
    <name evidence="1" type="primary">ihfB</name>
    <name evidence="1" type="synonym">himD</name>
    <name type="ordered locus">Shal_2046</name>
</gene>
<organism>
    <name type="scientific">Shewanella halifaxensis (strain HAW-EB4)</name>
    <dbReference type="NCBI Taxonomy" id="458817"/>
    <lineage>
        <taxon>Bacteria</taxon>
        <taxon>Pseudomonadati</taxon>
        <taxon>Pseudomonadota</taxon>
        <taxon>Gammaproteobacteria</taxon>
        <taxon>Alteromonadales</taxon>
        <taxon>Shewanellaceae</taxon>
        <taxon>Shewanella</taxon>
    </lineage>
</organism>
<reference key="1">
    <citation type="submission" date="2008-01" db="EMBL/GenBank/DDBJ databases">
        <title>Complete sequence of Shewanella halifaxensis HAW-EB4.</title>
        <authorList>
            <consortium name="US DOE Joint Genome Institute"/>
            <person name="Copeland A."/>
            <person name="Lucas S."/>
            <person name="Lapidus A."/>
            <person name="Glavina del Rio T."/>
            <person name="Dalin E."/>
            <person name="Tice H."/>
            <person name="Bruce D."/>
            <person name="Goodwin L."/>
            <person name="Pitluck S."/>
            <person name="Sims D."/>
            <person name="Brettin T."/>
            <person name="Detter J.C."/>
            <person name="Han C."/>
            <person name="Kuske C.R."/>
            <person name="Schmutz J."/>
            <person name="Larimer F."/>
            <person name="Land M."/>
            <person name="Hauser L."/>
            <person name="Kyrpides N."/>
            <person name="Kim E."/>
            <person name="Zhao J.-S."/>
            <person name="Richardson P."/>
        </authorList>
    </citation>
    <scope>NUCLEOTIDE SEQUENCE [LARGE SCALE GENOMIC DNA]</scope>
    <source>
        <strain>HAW-EB4</strain>
    </source>
</reference>
<feature type="chain" id="PRO_1000080052" description="Integration host factor subunit beta">
    <location>
        <begin position="1"/>
        <end position="95"/>
    </location>
</feature>
<keyword id="KW-0233">DNA recombination</keyword>
<keyword id="KW-0238">DNA-binding</keyword>
<keyword id="KW-0804">Transcription</keyword>
<keyword id="KW-0805">Transcription regulation</keyword>
<keyword id="KW-0810">Translation regulation</keyword>
<accession>B0TT46</accession>
<evidence type="ECO:0000255" key="1">
    <source>
        <dbReference type="HAMAP-Rule" id="MF_00381"/>
    </source>
</evidence>
<sequence length="95" mass="10690">MTKSELIEKLATRQSQLSAKEVEAAIKEMLEQMADTLEAGDRIEIRGFGSFSLHYRAPRTGRNPKTGTSVELEGKYVPHFKPGKELRERVDAINT</sequence>
<dbReference type="EMBL" id="CP000931">
    <property type="protein sequence ID" value="ABZ76607.1"/>
    <property type="molecule type" value="Genomic_DNA"/>
</dbReference>
<dbReference type="RefSeq" id="WP_012277137.1">
    <property type="nucleotide sequence ID" value="NC_010334.1"/>
</dbReference>
<dbReference type="SMR" id="B0TT46"/>
<dbReference type="STRING" id="458817.Shal_2046"/>
<dbReference type="KEGG" id="shl:Shal_2046"/>
<dbReference type="eggNOG" id="COG0776">
    <property type="taxonomic scope" value="Bacteria"/>
</dbReference>
<dbReference type="HOGENOM" id="CLU_105066_2_0_6"/>
<dbReference type="OrthoDB" id="9804203at2"/>
<dbReference type="Proteomes" id="UP000001317">
    <property type="component" value="Chromosome"/>
</dbReference>
<dbReference type="GO" id="GO:0005694">
    <property type="term" value="C:chromosome"/>
    <property type="evidence" value="ECO:0007669"/>
    <property type="project" value="InterPro"/>
</dbReference>
<dbReference type="GO" id="GO:0005829">
    <property type="term" value="C:cytosol"/>
    <property type="evidence" value="ECO:0007669"/>
    <property type="project" value="TreeGrafter"/>
</dbReference>
<dbReference type="GO" id="GO:0003677">
    <property type="term" value="F:DNA binding"/>
    <property type="evidence" value="ECO:0007669"/>
    <property type="project" value="UniProtKB-UniRule"/>
</dbReference>
<dbReference type="GO" id="GO:0030527">
    <property type="term" value="F:structural constituent of chromatin"/>
    <property type="evidence" value="ECO:0007669"/>
    <property type="project" value="InterPro"/>
</dbReference>
<dbReference type="GO" id="GO:0006310">
    <property type="term" value="P:DNA recombination"/>
    <property type="evidence" value="ECO:0007669"/>
    <property type="project" value="UniProtKB-UniRule"/>
</dbReference>
<dbReference type="GO" id="GO:0006355">
    <property type="term" value="P:regulation of DNA-templated transcription"/>
    <property type="evidence" value="ECO:0007669"/>
    <property type="project" value="UniProtKB-UniRule"/>
</dbReference>
<dbReference type="GO" id="GO:0006417">
    <property type="term" value="P:regulation of translation"/>
    <property type="evidence" value="ECO:0007669"/>
    <property type="project" value="UniProtKB-UniRule"/>
</dbReference>
<dbReference type="CDD" id="cd13836">
    <property type="entry name" value="IHF_B"/>
    <property type="match status" value="1"/>
</dbReference>
<dbReference type="FunFam" id="4.10.520.10:FF:000003">
    <property type="entry name" value="Integration host factor subunit beta"/>
    <property type="match status" value="1"/>
</dbReference>
<dbReference type="Gene3D" id="4.10.520.10">
    <property type="entry name" value="IHF-like DNA-binding proteins"/>
    <property type="match status" value="1"/>
</dbReference>
<dbReference type="HAMAP" id="MF_00381">
    <property type="entry name" value="IHF_beta"/>
    <property type="match status" value="1"/>
</dbReference>
<dbReference type="InterPro" id="IPR000119">
    <property type="entry name" value="Hist_DNA-bd"/>
</dbReference>
<dbReference type="InterPro" id="IPR020816">
    <property type="entry name" value="Histone-like_DNA-bd_CS"/>
</dbReference>
<dbReference type="InterPro" id="IPR010992">
    <property type="entry name" value="IHF-like_DNA-bd_dom_sf"/>
</dbReference>
<dbReference type="InterPro" id="IPR005685">
    <property type="entry name" value="IHF_beta"/>
</dbReference>
<dbReference type="NCBIfam" id="TIGR00988">
    <property type="entry name" value="hip"/>
    <property type="match status" value="1"/>
</dbReference>
<dbReference type="NCBIfam" id="NF001222">
    <property type="entry name" value="PRK00199.1"/>
    <property type="match status" value="1"/>
</dbReference>
<dbReference type="PANTHER" id="PTHR33175">
    <property type="entry name" value="DNA-BINDING PROTEIN HU"/>
    <property type="match status" value="1"/>
</dbReference>
<dbReference type="PANTHER" id="PTHR33175:SF5">
    <property type="entry name" value="INTEGRATION HOST FACTOR SUBUNIT BETA"/>
    <property type="match status" value="1"/>
</dbReference>
<dbReference type="Pfam" id="PF00216">
    <property type="entry name" value="Bac_DNA_binding"/>
    <property type="match status" value="1"/>
</dbReference>
<dbReference type="PRINTS" id="PR01727">
    <property type="entry name" value="DNABINDINGHU"/>
</dbReference>
<dbReference type="SMART" id="SM00411">
    <property type="entry name" value="BHL"/>
    <property type="match status" value="1"/>
</dbReference>
<dbReference type="SUPFAM" id="SSF47729">
    <property type="entry name" value="IHF-like DNA-binding proteins"/>
    <property type="match status" value="1"/>
</dbReference>
<dbReference type="PROSITE" id="PS00045">
    <property type="entry name" value="HISTONE_LIKE"/>
    <property type="match status" value="1"/>
</dbReference>
<name>IHFB_SHEHH</name>
<protein>
    <recommendedName>
        <fullName evidence="1">Integration host factor subunit beta</fullName>
        <shortName evidence="1">IHF-beta</shortName>
    </recommendedName>
</protein>
<proteinExistence type="inferred from homology"/>
<comment type="function">
    <text evidence="1">This protein is one of the two subunits of integration host factor, a specific DNA-binding protein that functions in genetic recombination as well as in transcriptional and translational control.</text>
</comment>
<comment type="subunit">
    <text evidence="1">Heterodimer of an alpha and a beta chain.</text>
</comment>
<comment type="similarity">
    <text evidence="1">Belongs to the bacterial histone-like protein family.</text>
</comment>